<accession>B0KCH9</accession>
<sequence>MKLYNTLSRTKEEFEPLNDKIVNMYVCGPTVYNYIHIGNARAFIVFDTVRRYLEYKGYKVNYVQNFTDIDDKIIKRAQEENVTTKEVAEKYIEEYFIDADNLGIKRATVHPKATEHIEDIIEFIKILIDKGYAYVVNGNVYFETAKFKDYGKLSHKNIEELQAGARIEINEEKKNPLDFVLWKAQKPGEPAWDSPWGKGRPGWHIECSVMSTKYLGKTLDIHAGGPDLVFPHHENEIAQSEAAYGQPFSKYWMHIGYLNINNEKMSKSKGNFFTVREITEKYNPEVLRLFMLMAHYRSPINFSLDLMEQAKSAYERLLNAVANLKHLLTVCKDRELNEEEKRIKEKFEEYKKEFEDAMDDDFNTADAISVLFEMSKTANTNISGNSSKKLVEYILDIFLKLSEILGLSYRGVETELNDEEILALIEERQKARKEKNWKLADEIRDRLREKGIILEDTPEGVRWKRV</sequence>
<gene>
    <name evidence="1" type="primary">cysS</name>
    <name type="ordered locus">Teth39_0353</name>
</gene>
<feature type="chain" id="PRO_1000090883" description="Cysteine--tRNA ligase">
    <location>
        <begin position="1"/>
        <end position="466"/>
    </location>
</feature>
<feature type="short sequence motif" description="'HIGH' region">
    <location>
        <begin position="29"/>
        <end position="39"/>
    </location>
</feature>
<feature type="short sequence motif" description="'KMSKS' region">
    <location>
        <begin position="264"/>
        <end position="268"/>
    </location>
</feature>
<feature type="binding site" evidence="1">
    <location>
        <position position="27"/>
    </location>
    <ligand>
        <name>Zn(2+)</name>
        <dbReference type="ChEBI" id="CHEBI:29105"/>
    </ligand>
</feature>
<feature type="binding site" evidence="1">
    <location>
        <position position="207"/>
    </location>
    <ligand>
        <name>Zn(2+)</name>
        <dbReference type="ChEBI" id="CHEBI:29105"/>
    </ligand>
</feature>
<feature type="binding site" evidence="1">
    <location>
        <position position="232"/>
    </location>
    <ligand>
        <name>Zn(2+)</name>
        <dbReference type="ChEBI" id="CHEBI:29105"/>
    </ligand>
</feature>
<feature type="binding site" evidence="1">
    <location>
        <position position="236"/>
    </location>
    <ligand>
        <name>Zn(2+)</name>
        <dbReference type="ChEBI" id="CHEBI:29105"/>
    </ligand>
</feature>
<feature type="binding site" evidence="1">
    <location>
        <position position="267"/>
    </location>
    <ligand>
        <name>ATP</name>
        <dbReference type="ChEBI" id="CHEBI:30616"/>
    </ligand>
</feature>
<dbReference type="EC" id="6.1.1.16" evidence="1"/>
<dbReference type="EMBL" id="CP000924">
    <property type="protein sequence ID" value="ABY94022.1"/>
    <property type="molecule type" value="Genomic_DNA"/>
</dbReference>
<dbReference type="RefSeq" id="WP_003868434.1">
    <property type="nucleotide sequence ID" value="NC_010321.1"/>
</dbReference>
<dbReference type="SMR" id="B0KCH9"/>
<dbReference type="STRING" id="340099.Teth39_0353"/>
<dbReference type="KEGG" id="tpd:Teth39_0353"/>
<dbReference type="eggNOG" id="COG0215">
    <property type="taxonomic scope" value="Bacteria"/>
</dbReference>
<dbReference type="HOGENOM" id="CLU_013528_0_1_9"/>
<dbReference type="Proteomes" id="UP000002156">
    <property type="component" value="Chromosome"/>
</dbReference>
<dbReference type="GO" id="GO:0005829">
    <property type="term" value="C:cytosol"/>
    <property type="evidence" value="ECO:0007669"/>
    <property type="project" value="TreeGrafter"/>
</dbReference>
<dbReference type="GO" id="GO:0005524">
    <property type="term" value="F:ATP binding"/>
    <property type="evidence" value="ECO:0007669"/>
    <property type="project" value="UniProtKB-UniRule"/>
</dbReference>
<dbReference type="GO" id="GO:0004817">
    <property type="term" value="F:cysteine-tRNA ligase activity"/>
    <property type="evidence" value="ECO:0007669"/>
    <property type="project" value="UniProtKB-UniRule"/>
</dbReference>
<dbReference type="GO" id="GO:0008270">
    <property type="term" value="F:zinc ion binding"/>
    <property type="evidence" value="ECO:0007669"/>
    <property type="project" value="UniProtKB-UniRule"/>
</dbReference>
<dbReference type="GO" id="GO:0006423">
    <property type="term" value="P:cysteinyl-tRNA aminoacylation"/>
    <property type="evidence" value="ECO:0007669"/>
    <property type="project" value="UniProtKB-UniRule"/>
</dbReference>
<dbReference type="CDD" id="cd00672">
    <property type="entry name" value="CysRS_core"/>
    <property type="match status" value="1"/>
</dbReference>
<dbReference type="FunFam" id="3.40.50.620:FF:000009">
    <property type="entry name" value="Cysteine--tRNA ligase"/>
    <property type="match status" value="1"/>
</dbReference>
<dbReference type="Gene3D" id="1.20.120.1910">
    <property type="entry name" value="Cysteine-tRNA ligase, C-terminal anti-codon recognition domain"/>
    <property type="match status" value="1"/>
</dbReference>
<dbReference type="Gene3D" id="3.40.50.620">
    <property type="entry name" value="HUPs"/>
    <property type="match status" value="1"/>
</dbReference>
<dbReference type="HAMAP" id="MF_00041">
    <property type="entry name" value="Cys_tRNA_synth"/>
    <property type="match status" value="1"/>
</dbReference>
<dbReference type="InterPro" id="IPR015803">
    <property type="entry name" value="Cys-tRNA-ligase"/>
</dbReference>
<dbReference type="InterPro" id="IPR015273">
    <property type="entry name" value="Cys-tRNA-synt_Ia_DALR"/>
</dbReference>
<dbReference type="InterPro" id="IPR024909">
    <property type="entry name" value="Cys-tRNA/MSH_ligase"/>
</dbReference>
<dbReference type="InterPro" id="IPR056411">
    <property type="entry name" value="CysS_C"/>
</dbReference>
<dbReference type="InterPro" id="IPR014729">
    <property type="entry name" value="Rossmann-like_a/b/a_fold"/>
</dbReference>
<dbReference type="InterPro" id="IPR032678">
    <property type="entry name" value="tRNA-synt_1_cat_dom"/>
</dbReference>
<dbReference type="InterPro" id="IPR009080">
    <property type="entry name" value="tRNAsynth_Ia_anticodon-bd"/>
</dbReference>
<dbReference type="NCBIfam" id="TIGR00435">
    <property type="entry name" value="cysS"/>
    <property type="match status" value="1"/>
</dbReference>
<dbReference type="PANTHER" id="PTHR10890:SF3">
    <property type="entry name" value="CYSTEINE--TRNA LIGASE, CYTOPLASMIC"/>
    <property type="match status" value="1"/>
</dbReference>
<dbReference type="PANTHER" id="PTHR10890">
    <property type="entry name" value="CYSTEINYL-TRNA SYNTHETASE"/>
    <property type="match status" value="1"/>
</dbReference>
<dbReference type="Pfam" id="PF23493">
    <property type="entry name" value="CysS_C"/>
    <property type="match status" value="1"/>
</dbReference>
<dbReference type="Pfam" id="PF09190">
    <property type="entry name" value="DALR_2"/>
    <property type="match status" value="1"/>
</dbReference>
<dbReference type="Pfam" id="PF01406">
    <property type="entry name" value="tRNA-synt_1e"/>
    <property type="match status" value="1"/>
</dbReference>
<dbReference type="PRINTS" id="PR00983">
    <property type="entry name" value="TRNASYNTHCYS"/>
</dbReference>
<dbReference type="SMART" id="SM00840">
    <property type="entry name" value="DALR_2"/>
    <property type="match status" value="1"/>
</dbReference>
<dbReference type="SUPFAM" id="SSF47323">
    <property type="entry name" value="Anticodon-binding domain of a subclass of class I aminoacyl-tRNA synthetases"/>
    <property type="match status" value="1"/>
</dbReference>
<dbReference type="SUPFAM" id="SSF52374">
    <property type="entry name" value="Nucleotidylyl transferase"/>
    <property type="match status" value="1"/>
</dbReference>
<protein>
    <recommendedName>
        <fullName evidence="1">Cysteine--tRNA ligase</fullName>
        <ecNumber evidence="1">6.1.1.16</ecNumber>
    </recommendedName>
    <alternativeName>
        <fullName evidence="1">Cysteinyl-tRNA synthetase</fullName>
        <shortName evidence="1">CysRS</shortName>
    </alternativeName>
</protein>
<comment type="catalytic activity">
    <reaction evidence="1">
        <text>tRNA(Cys) + L-cysteine + ATP = L-cysteinyl-tRNA(Cys) + AMP + diphosphate</text>
        <dbReference type="Rhea" id="RHEA:17773"/>
        <dbReference type="Rhea" id="RHEA-COMP:9661"/>
        <dbReference type="Rhea" id="RHEA-COMP:9679"/>
        <dbReference type="ChEBI" id="CHEBI:30616"/>
        <dbReference type="ChEBI" id="CHEBI:33019"/>
        <dbReference type="ChEBI" id="CHEBI:35235"/>
        <dbReference type="ChEBI" id="CHEBI:78442"/>
        <dbReference type="ChEBI" id="CHEBI:78517"/>
        <dbReference type="ChEBI" id="CHEBI:456215"/>
        <dbReference type="EC" id="6.1.1.16"/>
    </reaction>
</comment>
<comment type="cofactor">
    <cofactor evidence="1">
        <name>Zn(2+)</name>
        <dbReference type="ChEBI" id="CHEBI:29105"/>
    </cofactor>
    <text evidence="1">Binds 1 zinc ion per subunit.</text>
</comment>
<comment type="subunit">
    <text evidence="1">Monomer.</text>
</comment>
<comment type="subcellular location">
    <subcellularLocation>
        <location evidence="1">Cytoplasm</location>
    </subcellularLocation>
</comment>
<comment type="similarity">
    <text evidence="1">Belongs to the class-I aminoacyl-tRNA synthetase family.</text>
</comment>
<evidence type="ECO:0000255" key="1">
    <source>
        <dbReference type="HAMAP-Rule" id="MF_00041"/>
    </source>
</evidence>
<name>SYC_THEP3</name>
<organism>
    <name type="scientific">Thermoanaerobacter pseudethanolicus (strain ATCC 33223 / 39E)</name>
    <name type="common">Clostridium thermohydrosulfuricum</name>
    <dbReference type="NCBI Taxonomy" id="340099"/>
    <lineage>
        <taxon>Bacteria</taxon>
        <taxon>Bacillati</taxon>
        <taxon>Bacillota</taxon>
        <taxon>Clostridia</taxon>
        <taxon>Thermoanaerobacterales</taxon>
        <taxon>Thermoanaerobacteraceae</taxon>
        <taxon>Thermoanaerobacter</taxon>
    </lineage>
</organism>
<keyword id="KW-0030">Aminoacyl-tRNA synthetase</keyword>
<keyword id="KW-0067">ATP-binding</keyword>
<keyword id="KW-0963">Cytoplasm</keyword>
<keyword id="KW-0436">Ligase</keyword>
<keyword id="KW-0479">Metal-binding</keyword>
<keyword id="KW-0547">Nucleotide-binding</keyword>
<keyword id="KW-0648">Protein biosynthesis</keyword>
<keyword id="KW-1185">Reference proteome</keyword>
<keyword id="KW-0862">Zinc</keyword>
<proteinExistence type="inferred from homology"/>
<reference key="1">
    <citation type="submission" date="2008-01" db="EMBL/GenBank/DDBJ databases">
        <title>Complete sequence of Thermoanaerobacter pseudethanolicus 39E.</title>
        <authorList>
            <person name="Copeland A."/>
            <person name="Lucas S."/>
            <person name="Lapidus A."/>
            <person name="Barry K."/>
            <person name="Glavina del Rio T."/>
            <person name="Dalin E."/>
            <person name="Tice H."/>
            <person name="Pitluck S."/>
            <person name="Bruce D."/>
            <person name="Goodwin L."/>
            <person name="Saunders E."/>
            <person name="Brettin T."/>
            <person name="Detter J.C."/>
            <person name="Han C."/>
            <person name="Schmutz J."/>
            <person name="Larimer F."/>
            <person name="Land M."/>
            <person name="Hauser L."/>
            <person name="Kyrpides N."/>
            <person name="Lykidis A."/>
            <person name="Hemme C."/>
            <person name="Fields M.W."/>
            <person name="He Z."/>
            <person name="Zhou J."/>
            <person name="Richardson P."/>
        </authorList>
    </citation>
    <scope>NUCLEOTIDE SEQUENCE [LARGE SCALE GENOMIC DNA]</scope>
    <source>
        <strain>ATCC 33223 / DSM 2355 / 39E</strain>
    </source>
</reference>